<evidence type="ECO:0000255" key="1">
    <source>
        <dbReference type="HAMAP-Rule" id="MF_00807"/>
    </source>
</evidence>
<accession>Q93AG0</accession>
<reference key="1">
    <citation type="journal article" date="2003" name="Appl. Environ. Microbiol.">
        <title>Rhizobium leguminosarum biovar viciae 1-aminocyclopropane-1-carboxylate deaminase promotes nodulation of pea plants.</title>
        <authorList>
            <person name="Ma W."/>
            <person name="Guinel F.C."/>
            <person name="Glick B.R."/>
        </authorList>
    </citation>
    <scope>NUCLEOTIDE SEQUENCE [GENOMIC DNA]</scope>
    <source>
        <strain>128c53</strain>
    </source>
</reference>
<dbReference type="EC" id="3.5.99.7" evidence="1"/>
<dbReference type="EMBL" id="AF421376">
    <property type="protein sequence ID" value="AAL16088.1"/>
    <property type="molecule type" value="Genomic_DNA"/>
</dbReference>
<dbReference type="RefSeq" id="WP_018481130.1">
    <property type="nucleotide sequence ID" value="NZ_WIEO01000091.1"/>
</dbReference>
<dbReference type="SMR" id="Q93AG0"/>
<dbReference type="BRENDA" id="3.5.99.7">
    <property type="organism ID" value="5343"/>
</dbReference>
<dbReference type="GO" id="GO:0008660">
    <property type="term" value="F:1-aminocyclopropane-1-carboxylate deaminase activity"/>
    <property type="evidence" value="ECO:0007669"/>
    <property type="project" value="UniProtKB-UniRule"/>
</dbReference>
<dbReference type="GO" id="GO:0019148">
    <property type="term" value="F:D-cysteine desulfhydrase activity"/>
    <property type="evidence" value="ECO:0007669"/>
    <property type="project" value="TreeGrafter"/>
</dbReference>
<dbReference type="GO" id="GO:0030170">
    <property type="term" value="F:pyridoxal phosphate binding"/>
    <property type="evidence" value="ECO:0007669"/>
    <property type="project" value="InterPro"/>
</dbReference>
<dbReference type="GO" id="GO:0018871">
    <property type="term" value="P:1-aminocyclopropane-1-carboxylate metabolic process"/>
    <property type="evidence" value="ECO:0007669"/>
    <property type="project" value="UniProtKB-UniRule"/>
</dbReference>
<dbReference type="GO" id="GO:0009310">
    <property type="term" value="P:amine catabolic process"/>
    <property type="evidence" value="ECO:0007669"/>
    <property type="project" value="InterPro"/>
</dbReference>
<dbReference type="CDD" id="cd06449">
    <property type="entry name" value="ACCD"/>
    <property type="match status" value="1"/>
</dbReference>
<dbReference type="Gene3D" id="3.40.50.1100">
    <property type="match status" value="2"/>
</dbReference>
<dbReference type="HAMAP" id="MF_00807">
    <property type="entry name" value="ACC_deaminase"/>
    <property type="match status" value="1"/>
</dbReference>
<dbReference type="InterPro" id="IPR027278">
    <property type="entry name" value="ACCD_DCysDesulf"/>
</dbReference>
<dbReference type="InterPro" id="IPR005965">
    <property type="entry name" value="ACP_carboxylate_deaminase"/>
</dbReference>
<dbReference type="InterPro" id="IPR020601">
    <property type="entry name" value="ACP_carboxylate_deaminase_bac"/>
</dbReference>
<dbReference type="InterPro" id="IPR001926">
    <property type="entry name" value="TrpB-like_PALP"/>
</dbReference>
<dbReference type="InterPro" id="IPR036052">
    <property type="entry name" value="TrpB-like_PALP_sf"/>
</dbReference>
<dbReference type="NCBIfam" id="TIGR01274">
    <property type="entry name" value="ACC_deam"/>
    <property type="match status" value="1"/>
</dbReference>
<dbReference type="PANTHER" id="PTHR43780">
    <property type="entry name" value="1-AMINOCYCLOPROPANE-1-CARBOXYLATE DEAMINASE-RELATED"/>
    <property type="match status" value="1"/>
</dbReference>
<dbReference type="PANTHER" id="PTHR43780:SF2">
    <property type="entry name" value="1-AMINOCYCLOPROPANE-1-CARBOXYLATE DEAMINASE-RELATED"/>
    <property type="match status" value="1"/>
</dbReference>
<dbReference type="Pfam" id="PF00291">
    <property type="entry name" value="PALP"/>
    <property type="match status" value="1"/>
</dbReference>
<dbReference type="PIRSF" id="PIRSF006278">
    <property type="entry name" value="ACCD_DCysDesulf"/>
    <property type="match status" value="1"/>
</dbReference>
<dbReference type="SUPFAM" id="SSF53686">
    <property type="entry name" value="Tryptophan synthase beta subunit-like PLP-dependent enzymes"/>
    <property type="match status" value="1"/>
</dbReference>
<organism>
    <name type="scientific">Rhizobium leguminosarum bv. viciae</name>
    <dbReference type="NCBI Taxonomy" id="387"/>
    <lineage>
        <taxon>Bacteria</taxon>
        <taxon>Pseudomonadati</taxon>
        <taxon>Pseudomonadota</taxon>
        <taxon>Alphaproteobacteria</taxon>
        <taxon>Hyphomicrobiales</taxon>
        <taxon>Rhizobiaceae</taxon>
        <taxon>Rhizobium/Agrobacterium group</taxon>
        <taxon>Rhizobium</taxon>
    </lineage>
</organism>
<proteinExistence type="inferred from homology"/>
<feature type="chain" id="PRO_0000184507" description="1-aminocyclopropane-1-carboxylate deaminase">
    <location>
        <begin position="1"/>
        <end position="339"/>
    </location>
</feature>
<feature type="active site" description="Nucleophile" evidence="1">
    <location>
        <position position="79"/>
    </location>
</feature>
<feature type="modified residue" description="N6-(pyridoxal phosphate)lysine" evidence="1">
    <location>
        <position position="52"/>
    </location>
</feature>
<name>1A1D_RHILV</name>
<keyword id="KW-0378">Hydrolase</keyword>
<keyword id="KW-0663">Pyridoxal phosphate</keyword>
<protein>
    <recommendedName>
        <fullName evidence="1">1-aminocyclopropane-1-carboxylate deaminase</fullName>
        <shortName evidence="1">ACC deaminase</shortName>
        <shortName evidence="1">ACCD</shortName>
        <ecNumber evidence="1">3.5.99.7</ecNumber>
    </recommendedName>
</protein>
<comment type="function">
    <text>Catalyzes a cyclopropane ring-opening reaction, the irreversible conversion of 1-aminocyclopropane-1-carboxylate (ACC) to ammonia and alpha-ketobutyrate. Allows growth on ACC as a nitrogen source.</text>
</comment>
<comment type="catalytic activity">
    <reaction evidence="1">
        <text>1-aminocyclopropane-1-carboxylate + H2O = 2-oxobutanoate + NH4(+)</text>
        <dbReference type="Rhea" id="RHEA:16933"/>
        <dbReference type="ChEBI" id="CHEBI:15377"/>
        <dbReference type="ChEBI" id="CHEBI:16763"/>
        <dbReference type="ChEBI" id="CHEBI:28938"/>
        <dbReference type="ChEBI" id="CHEBI:58360"/>
        <dbReference type="EC" id="3.5.99.7"/>
    </reaction>
</comment>
<comment type="cofactor">
    <cofactor evidence="1">
        <name>pyridoxal 5'-phosphate</name>
        <dbReference type="ChEBI" id="CHEBI:597326"/>
    </cofactor>
</comment>
<comment type="subunit">
    <text evidence="1">Homotrimer.</text>
</comment>
<comment type="similarity">
    <text evidence="1">Belongs to the ACC deaminase/D-cysteine desulfhydrase family.</text>
</comment>
<gene>
    <name evidence="1" type="primary">acdS</name>
</gene>
<sequence>MSLLEKFERYPLTFGPTPIEHLPRLTAALGGKVDIYAKRDDCNSGLAMGGNKLRKLEYIVPDAIASGADTLVSIGGVQSNHTRMVAATAAKIGMKCVVIQEKWVPHYDAVYDRVGNILMTKLMGADSRLVEDGFDIGIRKSWEDAIQSVEDAGGKPYAIPAGASVHKFGGLGYVGFAEEVAAQEKDLGFIFDYIIVCVVTGSTQGGMIVGFAALDRADRVIGIDASGTLQQTRDQVRKIVDATSELVNLGRSVREDEIVINPDYAYPAYGVPSEETNEAIRLAARTEAMITDPVYEGKSMQGMIDLARKGFFPEGSKVLYAHLGGAPALNGYSYYYKDG</sequence>